<feature type="chain" id="PRO_1000115014" description="Small ribosomal subunit protein uS2">
    <location>
        <begin position="1"/>
        <end position="244"/>
    </location>
</feature>
<protein>
    <recommendedName>
        <fullName evidence="1">Small ribosomal subunit protein uS2</fullName>
    </recommendedName>
    <alternativeName>
        <fullName evidence="2">30S ribosomal protein S2</fullName>
    </alternativeName>
</protein>
<keyword id="KW-1185">Reference proteome</keyword>
<keyword id="KW-0687">Ribonucleoprotein</keyword>
<keyword id="KW-0689">Ribosomal protein</keyword>
<organism>
    <name type="scientific">Desulforudis audaxviator (strain MP104C)</name>
    <dbReference type="NCBI Taxonomy" id="477974"/>
    <lineage>
        <taxon>Bacteria</taxon>
        <taxon>Bacillati</taxon>
        <taxon>Bacillota</taxon>
        <taxon>Clostridia</taxon>
        <taxon>Thermoanaerobacterales</taxon>
        <taxon>Candidatus Desulforudaceae</taxon>
        <taxon>Candidatus Desulforudis</taxon>
    </lineage>
</organism>
<reference key="1">
    <citation type="submission" date="2007-10" db="EMBL/GenBank/DDBJ databases">
        <title>Complete sequence of chromosome of Desulforudis audaxviator MP104C.</title>
        <authorList>
            <person name="Copeland A."/>
            <person name="Lucas S."/>
            <person name="Lapidus A."/>
            <person name="Barry K."/>
            <person name="Glavina del Rio T."/>
            <person name="Dalin E."/>
            <person name="Tice H."/>
            <person name="Bruce D."/>
            <person name="Pitluck S."/>
            <person name="Lowry S.R."/>
            <person name="Larimer F."/>
            <person name="Land M.L."/>
            <person name="Hauser L."/>
            <person name="Kyrpides N."/>
            <person name="Ivanova N.N."/>
            <person name="Richardson P."/>
        </authorList>
    </citation>
    <scope>NUCLEOTIDE SEQUENCE [LARGE SCALE GENOMIC DNA]</scope>
    <source>
        <strain>MP104C</strain>
    </source>
</reference>
<evidence type="ECO:0000255" key="1">
    <source>
        <dbReference type="HAMAP-Rule" id="MF_00291"/>
    </source>
</evidence>
<evidence type="ECO:0000305" key="2"/>
<proteinExistence type="inferred from homology"/>
<name>RS2_DESAP</name>
<dbReference type="EMBL" id="CP000860">
    <property type="protein sequence ID" value="ACA59140.1"/>
    <property type="molecule type" value="Genomic_DNA"/>
</dbReference>
<dbReference type="RefSeq" id="WP_012301728.1">
    <property type="nucleotide sequence ID" value="NC_010424.1"/>
</dbReference>
<dbReference type="SMR" id="B1I2K0"/>
<dbReference type="STRING" id="477974.Daud_0606"/>
<dbReference type="KEGG" id="dau:Daud_0606"/>
<dbReference type="eggNOG" id="COG0052">
    <property type="taxonomic scope" value="Bacteria"/>
</dbReference>
<dbReference type="HOGENOM" id="CLU_040318_1_2_9"/>
<dbReference type="OrthoDB" id="9808036at2"/>
<dbReference type="Proteomes" id="UP000008544">
    <property type="component" value="Chromosome"/>
</dbReference>
<dbReference type="GO" id="GO:0022627">
    <property type="term" value="C:cytosolic small ribosomal subunit"/>
    <property type="evidence" value="ECO:0007669"/>
    <property type="project" value="TreeGrafter"/>
</dbReference>
<dbReference type="GO" id="GO:0003735">
    <property type="term" value="F:structural constituent of ribosome"/>
    <property type="evidence" value="ECO:0007669"/>
    <property type="project" value="InterPro"/>
</dbReference>
<dbReference type="GO" id="GO:0006412">
    <property type="term" value="P:translation"/>
    <property type="evidence" value="ECO:0007669"/>
    <property type="project" value="UniProtKB-UniRule"/>
</dbReference>
<dbReference type="CDD" id="cd01425">
    <property type="entry name" value="RPS2"/>
    <property type="match status" value="1"/>
</dbReference>
<dbReference type="FunFam" id="1.10.287.610:FF:000001">
    <property type="entry name" value="30S ribosomal protein S2"/>
    <property type="match status" value="1"/>
</dbReference>
<dbReference type="Gene3D" id="3.40.50.10490">
    <property type="entry name" value="Glucose-6-phosphate isomerase like protein, domain 1"/>
    <property type="match status" value="1"/>
</dbReference>
<dbReference type="Gene3D" id="1.10.287.610">
    <property type="entry name" value="Helix hairpin bin"/>
    <property type="match status" value="1"/>
</dbReference>
<dbReference type="HAMAP" id="MF_00291_B">
    <property type="entry name" value="Ribosomal_uS2_B"/>
    <property type="match status" value="1"/>
</dbReference>
<dbReference type="InterPro" id="IPR001865">
    <property type="entry name" value="Ribosomal_uS2"/>
</dbReference>
<dbReference type="InterPro" id="IPR005706">
    <property type="entry name" value="Ribosomal_uS2_bac/mit/plastid"/>
</dbReference>
<dbReference type="InterPro" id="IPR018130">
    <property type="entry name" value="Ribosomal_uS2_CS"/>
</dbReference>
<dbReference type="InterPro" id="IPR023591">
    <property type="entry name" value="Ribosomal_uS2_flav_dom_sf"/>
</dbReference>
<dbReference type="NCBIfam" id="TIGR01011">
    <property type="entry name" value="rpsB_bact"/>
    <property type="match status" value="1"/>
</dbReference>
<dbReference type="PANTHER" id="PTHR12534">
    <property type="entry name" value="30S RIBOSOMAL PROTEIN S2 PROKARYOTIC AND ORGANELLAR"/>
    <property type="match status" value="1"/>
</dbReference>
<dbReference type="PANTHER" id="PTHR12534:SF0">
    <property type="entry name" value="SMALL RIBOSOMAL SUBUNIT PROTEIN US2M"/>
    <property type="match status" value="1"/>
</dbReference>
<dbReference type="Pfam" id="PF00318">
    <property type="entry name" value="Ribosomal_S2"/>
    <property type="match status" value="1"/>
</dbReference>
<dbReference type="PRINTS" id="PR00395">
    <property type="entry name" value="RIBOSOMALS2"/>
</dbReference>
<dbReference type="SUPFAM" id="SSF52313">
    <property type="entry name" value="Ribosomal protein S2"/>
    <property type="match status" value="1"/>
</dbReference>
<dbReference type="PROSITE" id="PS00962">
    <property type="entry name" value="RIBOSOMAL_S2_1"/>
    <property type="match status" value="1"/>
</dbReference>
<dbReference type="PROSITE" id="PS00963">
    <property type="entry name" value="RIBOSOMAL_S2_2"/>
    <property type="match status" value="1"/>
</dbReference>
<comment type="similarity">
    <text evidence="1">Belongs to the universal ribosomal protein uS2 family.</text>
</comment>
<accession>B1I2K0</accession>
<gene>
    <name evidence="1" type="primary">rpsB</name>
    <name type="ordered locus">Daud_0606</name>
</gene>
<sequence length="244" mass="27837">MAIVTMKQLLEAGVHFGHQTRRWNPKMAPYIFTDRNGIYIIDLQKTVRKIEEAYNFIKQIVAEGQTVLFVGTKKQAQLTVVEEAGRCGMFYVNQRWLGGMLTNFQTIRRRIDRLKELEKMEAEGRFEVLPKKEVAELMHEKQRLEKYLKGIKDMTKLPGALFVIDPRKERIAVAEARKLGIPIVAIVDTNCDPDEIDYIIPGNDDAIRAVRLLTSRMADAVLEGRQGEQLAPEPDQEAVVEAEA</sequence>